<gene>
    <name evidence="1" type="primary">ecfA1</name>
    <name type="synonym">cbiO1</name>
    <name type="ordered locus">SAK_2109</name>
</gene>
<protein>
    <recommendedName>
        <fullName evidence="1">Energy-coupling factor transporter ATP-binding protein EcfA1</fullName>
        <shortName evidence="1">ECF transporter A component EcfA1</shortName>
        <ecNumber evidence="1">7.-.-.-</ecNumber>
    </recommendedName>
</protein>
<accession>Q3JYF4</accession>
<name>ECFA1_STRA1</name>
<proteinExistence type="inferred from homology"/>
<organism>
    <name type="scientific">Streptococcus agalactiae serotype Ia (strain ATCC 27591 / A909 / CDC SS700)</name>
    <dbReference type="NCBI Taxonomy" id="205921"/>
    <lineage>
        <taxon>Bacteria</taxon>
        <taxon>Bacillati</taxon>
        <taxon>Bacillota</taxon>
        <taxon>Bacilli</taxon>
        <taxon>Lactobacillales</taxon>
        <taxon>Streptococcaceae</taxon>
        <taxon>Streptococcus</taxon>
    </lineage>
</organism>
<reference key="1">
    <citation type="journal article" date="2005" name="Proc. Natl. Acad. Sci. U.S.A.">
        <title>Genome analysis of multiple pathogenic isolates of Streptococcus agalactiae: implications for the microbial 'pan-genome'.</title>
        <authorList>
            <person name="Tettelin H."/>
            <person name="Masignani V."/>
            <person name="Cieslewicz M.J."/>
            <person name="Donati C."/>
            <person name="Medini D."/>
            <person name="Ward N.L."/>
            <person name="Angiuoli S.V."/>
            <person name="Crabtree J."/>
            <person name="Jones A.L."/>
            <person name="Durkin A.S."/>
            <person name="DeBoy R.T."/>
            <person name="Davidsen T.M."/>
            <person name="Mora M."/>
            <person name="Scarselli M."/>
            <person name="Margarit y Ros I."/>
            <person name="Peterson J.D."/>
            <person name="Hauser C.R."/>
            <person name="Sundaram J.P."/>
            <person name="Nelson W.C."/>
            <person name="Madupu R."/>
            <person name="Brinkac L.M."/>
            <person name="Dodson R.J."/>
            <person name="Rosovitz M.J."/>
            <person name="Sullivan S.A."/>
            <person name="Daugherty S.C."/>
            <person name="Haft D.H."/>
            <person name="Selengut J."/>
            <person name="Gwinn M.L."/>
            <person name="Zhou L."/>
            <person name="Zafar N."/>
            <person name="Khouri H."/>
            <person name="Radune D."/>
            <person name="Dimitrov G."/>
            <person name="Watkins K."/>
            <person name="O'Connor K.J."/>
            <person name="Smith S."/>
            <person name="Utterback T.R."/>
            <person name="White O."/>
            <person name="Rubens C.E."/>
            <person name="Grandi G."/>
            <person name="Madoff L.C."/>
            <person name="Kasper D.L."/>
            <person name="Telford J.L."/>
            <person name="Wessels M.R."/>
            <person name="Rappuoli R."/>
            <person name="Fraser C.M."/>
        </authorList>
    </citation>
    <scope>NUCLEOTIDE SEQUENCE [LARGE SCALE GENOMIC DNA]</scope>
    <source>
        <strain>ATCC 27591 / A909 / CDC SS700</strain>
    </source>
</reference>
<comment type="function">
    <text evidence="1">ATP-binding (A) component of a common energy-coupling factor (ECF) ABC-transporter complex. Unlike classic ABC transporters this ECF transporter provides the energy necessary to transport a number of different substrates.</text>
</comment>
<comment type="subunit">
    <text evidence="1">Forms a stable energy-coupling factor (ECF) transporter complex composed of 2 membrane-embedded substrate-binding proteins (S component), 2 ATP-binding proteins (A component) and 2 transmembrane proteins (T component).</text>
</comment>
<comment type="subcellular location">
    <subcellularLocation>
        <location evidence="1">Cell membrane</location>
        <topology evidence="1">Peripheral membrane protein</topology>
    </subcellularLocation>
</comment>
<comment type="similarity">
    <text evidence="1">Belongs to the ABC transporter superfamily. Energy-coupling factor EcfA family.</text>
</comment>
<feature type="chain" id="PRO_0000287992" description="Energy-coupling factor transporter ATP-binding protein EcfA1">
    <location>
        <begin position="1"/>
        <end position="279"/>
    </location>
</feature>
<feature type="domain" description="ABC transporter" evidence="1">
    <location>
        <begin position="5"/>
        <end position="240"/>
    </location>
</feature>
<feature type="binding site" evidence="1">
    <location>
        <begin position="40"/>
        <end position="47"/>
    </location>
    <ligand>
        <name>ATP</name>
        <dbReference type="ChEBI" id="CHEBI:30616"/>
    </ligand>
</feature>
<evidence type="ECO:0000255" key="1">
    <source>
        <dbReference type="HAMAP-Rule" id="MF_01710"/>
    </source>
</evidence>
<keyword id="KW-0067">ATP-binding</keyword>
<keyword id="KW-1003">Cell membrane</keyword>
<keyword id="KW-0472">Membrane</keyword>
<keyword id="KW-0547">Nucleotide-binding</keyword>
<keyword id="KW-1278">Translocase</keyword>
<keyword id="KW-0813">Transport</keyword>
<sequence>MTNIITVNNLFFKYDSNQTHYQLENVSFHVKQGEWLSIIGHNGSGKSTTVRLIDGLLEAESGQIIIDGQELTEDNVWELRHKIGMVFQNPDNQFVGATVEDDVAFGLENKGIPLKDMKERVDQALDLVGMSEFKMREPARLSGGQKQRVAIAGAVAMRPQVIILDEATSMLDPEGRLELIRTIRAIRQKYNLTVISITHDLDEVALSDRVIVMKNGKVESTSTPKALFGRGNRLISLGLDVPFTSRLMAELAANGLDIGTEYLTEKELEEQLWELNLKM</sequence>
<dbReference type="EC" id="7.-.-.-" evidence="1"/>
<dbReference type="EMBL" id="CP000114">
    <property type="protein sequence ID" value="ABA44513.1"/>
    <property type="molecule type" value="Genomic_DNA"/>
</dbReference>
<dbReference type="RefSeq" id="WP_000181757.1">
    <property type="nucleotide sequence ID" value="NC_007432.1"/>
</dbReference>
<dbReference type="SMR" id="Q3JYF4"/>
<dbReference type="KEGG" id="sak:SAK_2109"/>
<dbReference type="HOGENOM" id="CLU_000604_1_22_9"/>
<dbReference type="GO" id="GO:0043190">
    <property type="term" value="C:ATP-binding cassette (ABC) transporter complex"/>
    <property type="evidence" value="ECO:0007669"/>
    <property type="project" value="TreeGrafter"/>
</dbReference>
<dbReference type="GO" id="GO:0005524">
    <property type="term" value="F:ATP binding"/>
    <property type="evidence" value="ECO:0007669"/>
    <property type="project" value="UniProtKB-KW"/>
</dbReference>
<dbReference type="GO" id="GO:0016887">
    <property type="term" value="F:ATP hydrolysis activity"/>
    <property type="evidence" value="ECO:0007669"/>
    <property type="project" value="InterPro"/>
</dbReference>
<dbReference type="GO" id="GO:0042626">
    <property type="term" value="F:ATPase-coupled transmembrane transporter activity"/>
    <property type="evidence" value="ECO:0007669"/>
    <property type="project" value="TreeGrafter"/>
</dbReference>
<dbReference type="CDD" id="cd03225">
    <property type="entry name" value="ABC_cobalt_CbiO_domain1"/>
    <property type="match status" value="1"/>
</dbReference>
<dbReference type="FunFam" id="3.40.50.300:FF:000224">
    <property type="entry name" value="Energy-coupling factor transporter ATP-binding protein EcfA"/>
    <property type="match status" value="1"/>
</dbReference>
<dbReference type="Gene3D" id="3.40.50.300">
    <property type="entry name" value="P-loop containing nucleotide triphosphate hydrolases"/>
    <property type="match status" value="1"/>
</dbReference>
<dbReference type="InterPro" id="IPR003593">
    <property type="entry name" value="AAA+_ATPase"/>
</dbReference>
<dbReference type="InterPro" id="IPR003439">
    <property type="entry name" value="ABC_transporter-like_ATP-bd"/>
</dbReference>
<dbReference type="InterPro" id="IPR017871">
    <property type="entry name" value="ABC_transporter-like_CS"/>
</dbReference>
<dbReference type="InterPro" id="IPR015856">
    <property type="entry name" value="ABC_transpr_CbiO/EcfA_su"/>
</dbReference>
<dbReference type="InterPro" id="IPR050095">
    <property type="entry name" value="ECF_ABC_transporter_ATP-bd"/>
</dbReference>
<dbReference type="InterPro" id="IPR030947">
    <property type="entry name" value="EcfA_1"/>
</dbReference>
<dbReference type="InterPro" id="IPR027417">
    <property type="entry name" value="P-loop_NTPase"/>
</dbReference>
<dbReference type="NCBIfam" id="TIGR04520">
    <property type="entry name" value="ECF_ATPase_1"/>
    <property type="match status" value="1"/>
</dbReference>
<dbReference type="NCBIfam" id="NF010156">
    <property type="entry name" value="PRK13635.1"/>
    <property type="match status" value="1"/>
</dbReference>
<dbReference type="NCBIfam" id="NF010167">
    <property type="entry name" value="PRK13648.1"/>
    <property type="match status" value="1"/>
</dbReference>
<dbReference type="PANTHER" id="PTHR43553:SF24">
    <property type="entry name" value="ENERGY-COUPLING FACTOR TRANSPORTER ATP-BINDING PROTEIN ECFA1"/>
    <property type="match status" value="1"/>
</dbReference>
<dbReference type="PANTHER" id="PTHR43553">
    <property type="entry name" value="HEAVY METAL TRANSPORTER"/>
    <property type="match status" value="1"/>
</dbReference>
<dbReference type="Pfam" id="PF00005">
    <property type="entry name" value="ABC_tran"/>
    <property type="match status" value="1"/>
</dbReference>
<dbReference type="SMART" id="SM00382">
    <property type="entry name" value="AAA"/>
    <property type="match status" value="1"/>
</dbReference>
<dbReference type="SUPFAM" id="SSF52540">
    <property type="entry name" value="P-loop containing nucleoside triphosphate hydrolases"/>
    <property type="match status" value="1"/>
</dbReference>
<dbReference type="PROSITE" id="PS00211">
    <property type="entry name" value="ABC_TRANSPORTER_1"/>
    <property type="match status" value="1"/>
</dbReference>
<dbReference type="PROSITE" id="PS50893">
    <property type="entry name" value="ABC_TRANSPORTER_2"/>
    <property type="match status" value="1"/>
</dbReference>
<dbReference type="PROSITE" id="PS51246">
    <property type="entry name" value="CBIO"/>
    <property type="match status" value="1"/>
</dbReference>